<evidence type="ECO:0000256" key="1">
    <source>
        <dbReference type="SAM" id="MobiDB-lite"/>
    </source>
</evidence>
<sequence length="50" mass="6086">MSYRNRLDQHSELFHHNWTRPKRSKSQVNGHTEMSQTNIILRSNAKAHRW</sequence>
<dbReference type="EMBL" id="AL009126">
    <property type="protein sequence ID" value="CAX52653.1"/>
    <property type="molecule type" value="Genomic_DNA"/>
</dbReference>
<dbReference type="RefSeq" id="WP_010327933.1">
    <property type="nucleotide sequence ID" value="NZ_OZ025638.1"/>
</dbReference>
<dbReference type="RefSeq" id="YP_003097754.1">
    <property type="nucleotide sequence ID" value="NC_000964.3"/>
</dbReference>
<dbReference type="FunCoup" id="C0H444">
    <property type="interactions" value="3"/>
</dbReference>
<dbReference type="STRING" id="224308.BSU22169"/>
<dbReference type="PaxDb" id="224308-BSU22169"/>
<dbReference type="EnsemblBacteria" id="CAX52653">
    <property type="protein sequence ID" value="CAX52653"/>
    <property type="gene ID" value="BSU_22169"/>
</dbReference>
<dbReference type="GeneID" id="8303061"/>
<dbReference type="KEGG" id="bsu:BSU22169"/>
<dbReference type="eggNOG" id="ENOG5033CTM">
    <property type="taxonomic scope" value="Bacteria"/>
</dbReference>
<dbReference type="InParanoid" id="C0H444"/>
<dbReference type="OrthoDB" id="2454841at2"/>
<dbReference type="BioCyc" id="BSUB:BSU22169-MONOMER"/>
<dbReference type="Proteomes" id="UP000001570">
    <property type="component" value="Chromosome"/>
</dbReference>
<dbReference type="InterPro" id="IPR025413">
    <property type="entry name" value="YpzG-like"/>
</dbReference>
<dbReference type="Pfam" id="PF14139">
    <property type="entry name" value="YpzG"/>
    <property type="match status" value="1"/>
</dbReference>
<reference key="1">
    <citation type="journal article" date="1997" name="Nature">
        <title>The complete genome sequence of the Gram-positive bacterium Bacillus subtilis.</title>
        <authorList>
            <person name="Kunst F."/>
            <person name="Ogasawara N."/>
            <person name="Moszer I."/>
            <person name="Albertini A.M."/>
            <person name="Alloni G."/>
            <person name="Azevedo V."/>
            <person name="Bertero M.G."/>
            <person name="Bessieres P."/>
            <person name="Bolotin A."/>
            <person name="Borchert S."/>
            <person name="Borriss R."/>
            <person name="Boursier L."/>
            <person name="Brans A."/>
            <person name="Braun M."/>
            <person name="Brignell S.C."/>
            <person name="Bron S."/>
            <person name="Brouillet S."/>
            <person name="Bruschi C.V."/>
            <person name="Caldwell B."/>
            <person name="Capuano V."/>
            <person name="Carter N.M."/>
            <person name="Choi S.-K."/>
            <person name="Codani J.-J."/>
            <person name="Connerton I.F."/>
            <person name="Cummings N.J."/>
            <person name="Daniel R.A."/>
            <person name="Denizot F."/>
            <person name="Devine K.M."/>
            <person name="Duesterhoeft A."/>
            <person name="Ehrlich S.D."/>
            <person name="Emmerson P.T."/>
            <person name="Entian K.-D."/>
            <person name="Errington J."/>
            <person name="Fabret C."/>
            <person name="Ferrari E."/>
            <person name="Foulger D."/>
            <person name="Fritz C."/>
            <person name="Fujita M."/>
            <person name="Fujita Y."/>
            <person name="Fuma S."/>
            <person name="Galizzi A."/>
            <person name="Galleron N."/>
            <person name="Ghim S.-Y."/>
            <person name="Glaser P."/>
            <person name="Goffeau A."/>
            <person name="Golightly E.J."/>
            <person name="Grandi G."/>
            <person name="Guiseppi G."/>
            <person name="Guy B.J."/>
            <person name="Haga K."/>
            <person name="Haiech J."/>
            <person name="Harwood C.R."/>
            <person name="Henaut A."/>
            <person name="Hilbert H."/>
            <person name="Holsappel S."/>
            <person name="Hosono S."/>
            <person name="Hullo M.-F."/>
            <person name="Itaya M."/>
            <person name="Jones L.-M."/>
            <person name="Joris B."/>
            <person name="Karamata D."/>
            <person name="Kasahara Y."/>
            <person name="Klaerr-Blanchard M."/>
            <person name="Klein C."/>
            <person name="Kobayashi Y."/>
            <person name="Koetter P."/>
            <person name="Koningstein G."/>
            <person name="Krogh S."/>
            <person name="Kumano M."/>
            <person name="Kurita K."/>
            <person name="Lapidus A."/>
            <person name="Lardinois S."/>
            <person name="Lauber J."/>
            <person name="Lazarevic V."/>
            <person name="Lee S.-M."/>
            <person name="Levine A."/>
            <person name="Liu H."/>
            <person name="Masuda S."/>
            <person name="Mauel C."/>
            <person name="Medigue C."/>
            <person name="Medina N."/>
            <person name="Mellado R.P."/>
            <person name="Mizuno M."/>
            <person name="Moestl D."/>
            <person name="Nakai S."/>
            <person name="Noback M."/>
            <person name="Noone D."/>
            <person name="O'Reilly M."/>
            <person name="Ogawa K."/>
            <person name="Ogiwara A."/>
            <person name="Oudega B."/>
            <person name="Park S.-H."/>
            <person name="Parro V."/>
            <person name="Pohl T.M."/>
            <person name="Portetelle D."/>
            <person name="Porwollik S."/>
            <person name="Prescott A.M."/>
            <person name="Presecan E."/>
            <person name="Pujic P."/>
            <person name="Purnelle B."/>
            <person name="Rapoport G."/>
            <person name="Rey M."/>
            <person name="Reynolds S."/>
            <person name="Rieger M."/>
            <person name="Rivolta C."/>
            <person name="Rocha E."/>
            <person name="Roche B."/>
            <person name="Rose M."/>
            <person name="Sadaie Y."/>
            <person name="Sato T."/>
            <person name="Scanlan E."/>
            <person name="Schleich S."/>
            <person name="Schroeter R."/>
            <person name="Scoffone F."/>
            <person name="Sekiguchi J."/>
            <person name="Sekowska A."/>
            <person name="Seror S.J."/>
            <person name="Serror P."/>
            <person name="Shin B.-S."/>
            <person name="Soldo B."/>
            <person name="Sorokin A."/>
            <person name="Tacconi E."/>
            <person name="Takagi T."/>
            <person name="Takahashi H."/>
            <person name="Takemaru K."/>
            <person name="Takeuchi M."/>
            <person name="Tamakoshi A."/>
            <person name="Tanaka T."/>
            <person name="Terpstra P."/>
            <person name="Tognoni A."/>
            <person name="Tosato V."/>
            <person name="Uchiyama S."/>
            <person name="Vandenbol M."/>
            <person name="Vannier F."/>
            <person name="Vassarotti A."/>
            <person name="Viari A."/>
            <person name="Wambutt R."/>
            <person name="Wedler E."/>
            <person name="Wedler H."/>
            <person name="Weitzenegger T."/>
            <person name="Winters P."/>
            <person name="Wipat A."/>
            <person name="Yamamoto H."/>
            <person name="Yamane K."/>
            <person name="Yasumoto K."/>
            <person name="Yata K."/>
            <person name="Yoshida K."/>
            <person name="Yoshikawa H.-F."/>
            <person name="Zumstein E."/>
            <person name="Yoshikawa H."/>
            <person name="Danchin A."/>
        </authorList>
    </citation>
    <scope>NUCLEOTIDE SEQUENCE [LARGE SCALE GENOMIC DNA]</scope>
    <source>
        <strain>168</strain>
    </source>
</reference>
<feature type="chain" id="PRO_0000382673" description="Uncharacterized protein YpzG">
    <location>
        <begin position="1"/>
        <end position="50"/>
    </location>
</feature>
<feature type="region of interest" description="Disordered" evidence="1">
    <location>
        <begin position="21"/>
        <end position="50"/>
    </location>
</feature>
<feature type="compositionally biased region" description="Polar residues" evidence="1">
    <location>
        <begin position="26"/>
        <end position="41"/>
    </location>
</feature>
<name>YPZG_BACSU</name>
<accession>C0H444</accession>
<keyword id="KW-1185">Reference proteome</keyword>
<organism>
    <name type="scientific">Bacillus subtilis (strain 168)</name>
    <dbReference type="NCBI Taxonomy" id="224308"/>
    <lineage>
        <taxon>Bacteria</taxon>
        <taxon>Bacillati</taxon>
        <taxon>Bacillota</taxon>
        <taxon>Bacilli</taxon>
        <taxon>Bacillales</taxon>
        <taxon>Bacillaceae</taxon>
        <taxon>Bacillus</taxon>
    </lineage>
</organism>
<protein>
    <recommendedName>
        <fullName>Uncharacterized protein YpzG</fullName>
    </recommendedName>
</protein>
<gene>
    <name type="primary">ypzG</name>
    <name type="ordered locus">BSU22169</name>
</gene>
<proteinExistence type="predicted"/>